<protein>
    <recommendedName>
        <fullName evidence="1">Large ribosomal subunit protein uL3</fullName>
    </recommendedName>
    <alternativeName>
        <fullName evidence="3">50S ribosomal protein L3</fullName>
    </alternativeName>
</protein>
<feature type="chain" id="PRO_1000052076" description="Large ribosomal subunit protein uL3">
    <location>
        <begin position="1"/>
        <end position="333"/>
    </location>
</feature>
<feature type="region of interest" description="Disordered" evidence="2">
    <location>
        <begin position="1"/>
        <end position="29"/>
    </location>
</feature>
<feature type="compositionally biased region" description="Basic residues" evidence="2">
    <location>
        <begin position="1"/>
        <end position="10"/>
    </location>
</feature>
<feature type="compositionally biased region" description="Basic residues" evidence="2">
    <location>
        <begin position="17"/>
        <end position="26"/>
    </location>
</feature>
<proteinExistence type="inferred from homology"/>
<accession>A6UV68</accession>
<reference key="1">
    <citation type="submission" date="2007-06" db="EMBL/GenBank/DDBJ databases">
        <title>Complete sequence of Methanococcus aeolicus Nankai-3.</title>
        <authorList>
            <consortium name="US DOE Joint Genome Institute"/>
            <person name="Copeland A."/>
            <person name="Lucas S."/>
            <person name="Lapidus A."/>
            <person name="Barry K."/>
            <person name="Glavina del Rio T."/>
            <person name="Dalin E."/>
            <person name="Tice H."/>
            <person name="Pitluck S."/>
            <person name="Chain P."/>
            <person name="Malfatti S."/>
            <person name="Shin M."/>
            <person name="Vergez L."/>
            <person name="Schmutz J."/>
            <person name="Larimer F."/>
            <person name="Land M."/>
            <person name="Hauser L."/>
            <person name="Kyrpides N."/>
            <person name="Lykidis A."/>
            <person name="Sieprawska-Lupa M."/>
            <person name="Whitman W.B."/>
            <person name="Richardson P."/>
        </authorList>
    </citation>
    <scope>NUCLEOTIDE SEQUENCE [LARGE SCALE GENOMIC DNA]</scope>
    <source>
        <strain>ATCC BAA-1280 / DSM 17508 / OCM 812 / Nankai-3</strain>
    </source>
</reference>
<name>RL3_META3</name>
<gene>
    <name evidence="1" type="primary">rpl3</name>
    <name type="ordered locus">Maeo_0807</name>
</gene>
<keyword id="KW-0687">Ribonucleoprotein</keyword>
<keyword id="KW-0689">Ribosomal protein</keyword>
<keyword id="KW-0694">RNA-binding</keyword>
<keyword id="KW-0699">rRNA-binding</keyword>
<sequence>MGMKRNRPRRGSLAFSPRKRAKRPVPKIRSWPERETVKLLAFPVYKAGTTHALYKENNPKSPNADQDVFTPVTVMEAPDITIAGIRAYGKDTKGLKALTEVWADSFDKELGRKINLPKEPKANTEKLDEVADKIVEVRAIVHTNPKDTNLPKKKPEIIEIKIGGKNISDIIAYAKDIIGKKLSINDVFTGGEFIDTVAITKGKGFQGPVKRWGIKIQFGKHQNKGVGRHTGSIGPWTPKRIMWTVPMAGQVGFHQRTEYNKRILKIGENGSEIVPKGGFLNYGVVKNNYVLVKGSVQGPAKRMVVLREAIRNPEDKFGLPELTYVSTESKQGN</sequence>
<evidence type="ECO:0000255" key="1">
    <source>
        <dbReference type="HAMAP-Rule" id="MF_01325"/>
    </source>
</evidence>
<evidence type="ECO:0000256" key="2">
    <source>
        <dbReference type="SAM" id="MobiDB-lite"/>
    </source>
</evidence>
<evidence type="ECO:0000305" key="3"/>
<organism>
    <name type="scientific">Methanococcus aeolicus (strain ATCC BAA-1280 / DSM 17508 / OCM 812 / Nankai-3)</name>
    <dbReference type="NCBI Taxonomy" id="419665"/>
    <lineage>
        <taxon>Archaea</taxon>
        <taxon>Methanobacteriati</taxon>
        <taxon>Methanobacteriota</taxon>
        <taxon>Methanomada group</taxon>
        <taxon>Methanococci</taxon>
        <taxon>Methanococcales</taxon>
        <taxon>Methanococcaceae</taxon>
        <taxon>Methanococcus</taxon>
    </lineage>
</organism>
<dbReference type="EMBL" id="CP000743">
    <property type="protein sequence ID" value="ABR56390.1"/>
    <property type="molecule type" value="Genomic_DNA"/>
</dbReference>
<dbReference type="RefSeq" id="WP_011973522.1">
    <property type="nucleotide sequence ID" value="NC_009635.1"/>
</dbReference>
<dbReference type="SMR" id="A6UV68"/>
<dbReference type="STRING" id="419665.Maeo_0807"/>
<dbReference type="GeneID" id="5326283"/>
<dbReference type="KEGG" id="mae:Maeo_0807"/>
<dbReference type="eggNOG" id="arCOG04070">
    <property type="taxonomic scope" value="Archaea"/>
</dbReference>
<dbReference type="HOGENOM" id="CLU_033361_2_0_2"/>
<dbReference type="OrthoDB" id="6121at2157"/>
<dbReference type="Proteomes" id="UP000001106">
    <property type="component" value="Chromosome"/>
</dbReference>
<dbReference type="GO" id="GO:0022625">
    <property type="term" value="C:cytosolic large ribosomal subunit"/>
    <property type="evidence" value="ECO:0007669"/>
    <property type="project" value="TreeGrafter"/>
</dbReference>
<dbReference type="GO" id="GO:0019843">
    <property type="term" value="F:rRNA binding"/>
    <property type="evidence" value="ECO:0007669"/>
    <property type="project" value="UniProtKB-UniRule"/>
</dbReference>
<dbReference type="GO" id="GO:0003735">
    <property type="term" value="F:structural constituent of ribosome"/>
    <property type="evidence" value="ECO:0007669"/>
    <property type="project" value="InterPro"/>
</dbReference>
<dbReference type="GO" id="GO:0006412">
    <property type="term" value="P:translation"/>
    <property type="evidence" value="ECO:0007669"/>
    <property type="project" value="UniProtKB-UniRule"/>
</dbReference>
<dbReference type="Gene3D" id="3.30.1430.10">
    <property type="match status" value="1"/>
</dbReference>
<dbReference type="Gene3D" id="4.10.960.10">
    <property type="entry name" value="Ribosomal protein L3, domain 3"/>
    <property type="match status" value="1"/>
</dbReference>
<dbReference type="Gene3D" id="2.40.30.10">
    <property type="entry name" value="Translation factors"/>
    <property type="match status" value="1"/>
</dbReference>
<dbReference type="HAMAP" id="MF_01325_A">
    <property type="entry name" value="Ribosomal_uL3_A"/>
    <property type="match status" value="1"/>
</dbReference>
<dbReference type="InterPro" id="IPR045077">
    <property type="entry name" value="L3_arc_euk"/>
</dbReference>
<dbReference type="InterPro" id="IPR044892">
    <property type="entry name" value="Ribosomal_L3_dom_3_arc_sf"/>
</dbReference>
<dbReference type="InterPro" id="IPR000597">
    <property type="entry name" value="Ribosomal_uL3"/>
</dbReference>
<dbReference type="InterPro" id="IPR019928">
    <property type="entry name" value="Ribosomal_uL3_arc"/>
</dbReference>
<dbReference type="InterPro" id="IPR019926">
    <property type="entry name" value="Ribosomal_uL3_CS"/>
</dbReference>
<dbReference type="InterPro" id="IPR009000">
    <property type="entry name" value="Transl_B-barrel_sf"/>
</dbReference>
<dbReference type="NCBIfam" id="TIGR03626">
    <property type="entry name" value="L3_arch"/>
    <property type="match status" value="1"/>
</dbReference>
<dbReference type="NCBIfam" id="NF003261">
    <property type="entry name" value="PRK04231.1"/>
    <property type="match status" value="1"/>
</dbReference>
<dbReference type="PANTHER" id="PTHR11363">
    <property type="entry name" value="60S RIBOSOMAL PROTEIN L3-RELATED"/>
    <property type="match status" value="1"/>
</dbReference>
<dbReference type="PANTHER" id="PTHR11363:SF5">
    <property type="entry name" value="LARGE RIBOSOMAL SUBUNIT PROTEIN UL3"/>
    <property type="match status" value="1"/>
</dbReference>
<dbReference type="Pfam" id="PF00297">
    <property type="entry name" value="Ribosomal_L3"/>
    <property type="match status" value="1"/>
</dbReference>
<dbReference type="SUPFAM" id="SSF50447">
    <property type="entry name" value="Translation proteins"/>
    <property type="match status" value="1"/>
</dbReference>
<dbReference type="PROSITE" id="PS00474">
    <property type="entry name" value="RIBOSOMAL_L3"/>
    <property type="match status" value="1"/>
</dbReference>
<comment type="function">
    <text evidence="1">One of the primary rRNA binding proteins, it binds directly near the 3'-end of the 23S rRNA, where it nucleates assembly of the 50S subunit.</text>
</comment>
<comment type="subunit">
    <text evidence="1">Part of the 50S ribosomal subunit. Forms a cluster with proteins L14 and L24e.</text>
</comment>
<comment type="similarity">
    <text evidence="1">Belongs to the universal ribosomal protein uL3 family.</text>
</comment>